<feature type="chain" id="PRO_0000172237" description="S-ribosylhomocysteine lyase">
    <location>
        <begin position="1"/>
        <end position="155"/>
    </location>
</feature>
<feature type="binding site" evidence="1">
    <location>
        <position position="57"/>
    </location>
    <ligand>
        <name>Fe cation</name>
        <dbReference type="ChEBI" id="CHEBI:24875"/>
    </ligand>
</feature>
<feature type="binding site" evidence="1">
    <location>
        <position position="61"/>
    </location>
    <ligand>
        <name>Fe cation</name>
        <dbReference type="ChEBI" id="CHEBI:24875"/>
    </ligand>
</feature>
<feature type="binding site" evidence="1">
    <location>
        <position position="124"/>
    </location>
    <ligand>
        <name>Fe cation</name>
        <dbReference type="ChEBI" id="CHEBI:24875"/>
    </ligand>
</feature>
<feature type="sequence conflict" description="In Ref. 1; AAM48492." evidence="2" ref="1">
    <original>S</original>
    <variation>R</variation>
    <location>
        <position position="131"/>
    </location>
</feature>
<sequence>MAEKMNVESFNLDHTKVKAPFVRLAGTKVGVHGDEIYKYDVRFKQPNKEHMEMPALHSLEHLMAELARNHTDKLVDISPMGCQTGFYVSFINHSDYDDALEIIATTLTDVLVATEVPACNEVQCGWAASHSLEGAKALAEEFLAKRSEWKNVFGE</sequence>
<keyword id="KW-0071">Autoinducer synthesis</keyword>
<keyword id="KW-0408">Iron</keyword>
<keyword id="KW-0456">Lyase</keyword>
<keyword id="KW-0479">Metal-binding</keyword>
<keyword id="KW-0673">Quorum sensing</keyword>
<keyword id="KW-1185">Reference proteome</keyword>
<dbReference type="EC" id="4.4.1.21" evidence="1"/>
<dbReference type="EMBL" id="AF084044">
    <property type="protein sequence ID" value="AAM48492.1"/>
    <property type="molecule type" value="Genomic_DNA"/>
</dbReference>
<dbReference type="EMBL" id="AL591978">
    <property type="protein sequence ID" value="CAC99366.1"/>
    <property type="molecule type" value="Genomic_DNA"/>
</dbReference>
<dbReference type="PIR" id="AH1235">
    <property type="entry name" value="AH1235"/>
</dbReference>
<dbReference type="RefSeq" id="NP_464813.1">
    <property type="nucleotide sequence ID" value="NC_003210.1"/>
</dbReference>
<dbReference type="RefSeq" id="WP_003723733.1">
    <property type="nucleotide sequence ID" value="NZ_CP149495.1"/>
</dbReference>
<dbReference type="SMR" id="Q8Y7I9"/>
<dbReference type="STRING" id="169963.gene:17593945"/>
<dbReference type="PaxDb" id="169963-lmo1288"/>
<dbReference type="EnsemblBacteria" id="CAC99366">
    <property type="protein sequence ID" value="CAC99366"/>
    <property type="gene ID" value="CAC99366"/>
</dbReference>
<dbReference type="GeneID" id="987285"/>
<dbReference type="KEGG" id="lmo:lmo1288"/>
<dbReference type="PATRIC" id="fig|169963.11.peg.1323"/>
<dbReference type="eggNOG" id="COG1854">
    <property type="taxonomic scope" value="Bacteria"/>
</dbReference>
<dbReference type="HOGENOM" id="CLU_107531_2_0_9"/>
<dbReference type="OrthoDB" id="9788129at2"/>
<dbReference type="PhylomeDB" id="Q8Y7I9"/>
<dbReference type="BioCyc" id="LMON169963:LMO1288-MONOMER"/>
<dbReference type="Proteomes" id="UP000000817">
    <property type="component" value="Chromosome"/>
</dbReference>
<dbReference type="GO" id="GO:0005829">
    <property type="term" value="C:cytosol"/>
    <property type="evidence" value="ECO:0000318"/>
    <property type="project" value="GO_Central"/>
</dbReference>
<dbReference type="GO" id="GO:0005506">
    <property type="term" value="F:iron ion binding"/>
    <property type="evidence" value="ECO:0007669"/>
    <property type="project" value="InterPro"/>
</dbReference>
<dbReference type="GO" id="GO:0043768">
    <property type="term" value="F:S-ribosylhomocysteine lyase activity"/>
    <property type="evidence" value="ECO:0000318"/>
    <property type="project" value="GO_Central"/>
</dbReference>
<dbReference type="GO" id="GO:0019284">
    <property type="term" value="P:L-methionine salvage from S-adenosylmethionine"/>
    <property type="evidence" value="ECO:0000318"/>
    <property type="project" value="GO_Central"/>
</dbReference>
<dbReference type="GO" id="GO:1900232">
    <property type="term" value="P:negative regulation of single-species biofilm formation on inanimate substrate"/>
    <property type="evidence" value="ECO:0000315"/>
    <property type="project" value="CACAO"/>
</dbReference>
<dbReference type="GO" id="GO:0009372">
    <property type="term" value="P:quorum sensing"/>
    <property type="evidence" value="ECO:0007669"/>
    <property type="project" value="UniProtKB-UniRule"/>
</dbReference>
<dbReference type="FunFam" id="3.30.1360.80:FF:000002">
    <property type="entry name" value="S-ribosylhomocysteine lyase"/>
    <property type="match status" value="1"/>
</dbReference>
<dbReference type="Gene3D" id="3.30.1360.80">
    <property type="entry name" value="S-ribosylhomocysteinase (LuxS)"/>
    <property type="match status" value="1"/>
</dbReference>
<dbReference type="HAMAP" id="MF_00091">
    <property type="entry name" value="LuxS"/>
    <property type="match status" value="1"/>
</dbReference>
<dbReference type="InterPro" id="IPR037005">
    <property type="entry name" value="LuxS_sf"/>
</dbReference>
<dbReference type="InterPro" id="IPR011249">
    <property type="entry name" value="Metalloenz_LuxS/M16"/>
</dbReference>
<dbReference type="InterPro" id="IPR003815">
    <property type="entry name" value="S-ribosylhomocysteinase"/>
</dbReference>
<dbReference type="NCBIfam" id="NF002604">
    <property type="entry name" value="PRK02260.1-4"/>
    <property type="match status" value="1"/>
</dbReference>
<dbReference type="PANTHER" id="PTHR35799">
    <property type="entry name" value="S-RIBOSYLHOMOCYSTEINE LYASE"/>
    <property type="match status" value="1"/>
</dbReference>
<dbReference type="PANTHER" id="PTHR35799:SF1">
    <property type="entry name" value="S-RIBOSYLHOMOCYSTEINE LYASE"/>
    <property type="match status" value="1"/>
</dbReference>
<dbReference type="Pfam" id="PF02664">
    <property type="entry name" value="LuxS"/>
    <property type="match status" value="1"/>
</dbReference>
<dbReference type="PIRSF" id="PIRSF006160">
    <property type="entry name" value="AI2"/>
    <property type="match status" value="1"/>
</dbReference>
<dbReference type="PRINTS" id="PR01487">
    <property type="entry name" value="LUXSPROTEIN"/>
</dbReference>
<dbReference type="SUPFAM" id="SSF63411">
    <property type="entry name" value="LuxS/MPP-like metallohydrolase"/>
    <property type="match status" value="1"/>
</dbReference>
<evidence type="ECO:0000255" key="1">
    <source>
        <dbReference type="HAMAP-Rule" id="MF_00091"/>
    </source>
</evidence>
<evidence type="ECO:0000305" key="2"/>
<comment type="function">
    <text evidence="1">Involved in the synthesis of autoinducer 2 (AI-2) which is secreted by bacteria and is used to communicate both the cell density and the metabolic potential of the environment. The regulation of gene expression in response to changes in cell density is called quorum sensing. Catalyzes the transformation of S-ribosylhomocysteine (RHC) to homocysteine (HC) and 4,5-dihydroxy-2,3-pentadione (DPD).</text>
</comment>
<comment type="catalytic activity">
    <reaction evidence="1">
        <text>S-(5-deoxy-D-ribos-5-yl)-L-homocysteine = (S)-4,5-dihydroxypentane-2,3-dione + L-homocysteine</text>
        <dbReference type="Rhea" id="RHEA:17753"/>
        <dbReference type="ChEBI" id="CHEBI:29484"/>
        <dbReference type="ChEBI" id="CHEBI:58195"/>
        <dbReference type="ChEBI" id="CHEBI:58199"/>
        <dbReference type="EC" id="4.4.1.21"/>
    </reaction>
</comment>
<comment type="cofactor">
    <cofactor evidence="1">
        <name>Fe cation</name>
        <dbReference type="ChEBI" id="CHEBI:24875"/>
    </cofactor>
    <text evidence="1">Binds 1 Fe cation per subunit.</text>
</comment>
<comment type="subunit">
    <text evidence="1">Homodimer.</text>
</comment>
<comment type="similarity">
    <text evidence="1">Belongs to the LuxS family.</text>
</comment>
<protein>
    <recommendedName>
        <fullName evidence="1">S-ribosylhomocysteine lyase</fullName>
        <ecNumber evidence="1">4.4.1.21</ecNumber>
    </recommendedName>
    <alternativeName>
        <fullName evidence="1">AI-2 synthesis protein</fullName>
    </alternativeName>
    <alternativeName>
        <fullName evidence="1">Autoinducer-2 production protein LuxS</fullName>
    </alternativeName>
</protein>
<reference key="1">
    <citation type="journal article" date="2002" name="J. Antimicrob. Chemother.">
        <title>Molecular characterization of the genes encoding DNA gyrase and topoisomerase IV of Listeria monocytogenes.</title>
        <authorList>
            <person name="Lampidis R."/>
            <person name="Kostrewa D."/>
            <person name="Hof H."/>
        </authorList>
    </citation>
    <scope>NUCLEOTIDE SEQUENCE [GENOMIC DNA]</scope>
    <source>
        <strain>EGD</strain>
    </source>
</reference>
<reference key="2">
    <citation type="journal article" date="2001" name="Science">
        <title>Comparative genomics of Listeria species.</title>
        <authorList>
            <person name="Glaser P."/>
            <person name="Frangeul L."/>
            <person name="Buchrieser C."/>
            <person name="Rusniok C."/>
            <person name="Amend A."/>
            <person name="Baquero F."/>
            <person name="Berche P."/>
            <person name="Bloecker H."/>
            <person name="Brandt P."/>
            <person name="Chakraborty T."/>
            <person name="Charbit A."/>
            <person name="Chetouani F."/>
            <person name="Couve E."/>
            <person name="de Daruvar A."/>
            <person name="Dehoux P."/>
            <person name="Domann E."/>
            <person name="Dominguez-Bernal G."/>
            <person name="Duchaud E."/>
            <person name="Durant L."/>
            <person name="Dussurget O."/>
            <person name="Entian K.-D."/>
            <person name="Fsihi H."/>
            <person name="Garcia-del Portillo F."/>
            <person name="Garrido P."/>
            <person name="Gautier L."/>
            <person name="Goebel W."/>
            <person name="Gomez-Lopez N."/>
            <person name="Hain T."/>
            <person name="Hauf J."/>
            <person name="Jackson D."/>
            <person name="Jones L.-M."/>
            <person name="Kaerst U."/>
            <person name="Kreft J."/>
            <person name="Kuhn M."/>
            <person name="Kunst F."/>
            <person name="Kurapkat G."/>
            <person name="Madueno E."/>
            <person name="Maitournam A."/>
            <person name="Mata Vicente J."/>
            <person name="Ng E."/>
            <person name="Nedjari H."/>
            <person name="Nordsiek G."/>
            <person name="Novella S."/>
            <person name="de Pablos B."/>
            <person name="Perez-Diaz J.-C."/>
            <person name="Purcell R."/>
            <person name="Remmel B."/>
            <person name="Rose M."/>
            <person name="Schlueter T."/>
            <person name="Simoes N."/>
            <person name="Tierrez A."/>
            <person name="Vazquez-Boland J.-A."/>
            <person name="Voss H."/>
            <person name="Wehland J."/>
            <person name="Cossart P."/>
        </authorList>
    </citation>
    <scope>NUCLEOTIDE SEQUENCE [LARGE SCALE GENOMIC DNA]</scope>
    <source>
        <strain>ATCC BAA-679 / EGD-e</strain>
    </source>
</reference>
<name>LUXS_LISMO</name>
<accession>Q8Y7I9</accession>
<accession>Q8KYA8</accession>
<organism>
    <name type="scientific">Listeria monocytogenes serovar 1/2a (strain ATCC BAA-679 / EGD-e)</name>
    <dbReference type="NCBI Taxonomy" id="169963"/>
    <lineage>
        <taxon>Bacteria</taxon>
        <taxon>Bacillati</taxon>
        <taxon>Bacillota</taxon>
        <taxon>Bacilli</taxon>
        <taxon>Bacillales</taxon>
        <taxon>Listeriaceae</taxon>
        <taxon>Listeria</taxon>
    </lineage>
</organism>
<proteinExistence type="inferred from homology"/>
<gene>
    <name evidence="1" type="primary">luxS</name>
    <name type="ordered locus">lmo1288</name>
</gene>